<evidence type="ECO:0000250" key="1"/>
<evidence type="ECO:0000255" key="2"/>
<evidence type="ECO:0000305" key="3"/>
<feature type="chain" id="PRO_0000046290" description="Plasma membrane ATPase 2">
    <location>
        <begin position="1" status="less than"/>
        <end position="704"/>
    </location>
</feature>
<feature type="transmembrane region" description="Helical; Name=3" evidence="2">
    <location>
        <begin position="1" status="less than"/>
        <end position="16"/>
    </location>
</feature>
<feature type="topological domain" description="Extracellular" evidence="2">
    <location>
        <begin position="17"/>
        <end position="26"/>
    </location>
</feature>
<feature type="transmembrane region" description="Helical; Name=4" evidence="2">
    <location>
        <begin position="27"/>
        <end position="48"/>
    </location>
</feature>
<feature type="topological domain" description="Cytoplasmic" evidence="2">
    <location>
        <begin position="49"/>
        <end position="395"/>
    </location>
</feature>
<feature type="transmembrane region" description="Helical; Name=5" evidence="2">
    <location>
        <begin position="396"/>
        <end position="417"/>
    </location>
</feature>
<feature type="topological domain" description="Extracellular" evidence="2">
    <location>
        <begin position="418"/>
        <end position="422"/>
    </location>
</feature>
<feature type="transmembrane region" description="Helical; Name=6" evidence="2">
    <location>
        <begin position="423"/>
        <end position="445"/>
    </location>
</feature>
<feature type="topological domain" description="Cytoplasmic" evidence="2">
    <location>
        <begin position="446"/>
        <end position="461"/>
    </location>
</feature>
<feature type="transmembrane region" description="Helical; Name=7" evidence="2">
    <location>
        <begin position="462"/>
        <end position="482"/>
    </location>
</feature>
<feature type="topological domain" description="Extracellular" evidence="2">
    <location>
        <begin position="483"/>
        <end position="507"/>
    </location>
</feature>
<feature type="transmembrane region" description="Helical; Name=8" evidence="2">
    <location>
        <begin position="508"/>
        <end position="528"/>
    </location>
</feature>
<feature type="topological domain" description="Cytoplasmic" evidence="2">
    <location>
        <begin position="529"/>
        <end position="540"/>
    </location>
</feature>
<feature type="transmembrane region" description="Helical; Name=9" evidence="2">
    <location>
        <begin position="541"/>
        <end position="561"/>
    </location>
</feature>
<feature type="topological domain" description="Extracellular" evidence="2">
    <location>
        <begin position="562"/>
        <end position="570"/>
    </location>
</feature>
<feature type="transmembrane region" description="Helical; Name=10" evidence="2">
    <location>
        <begin position="571"/>
        <end position="591"/>
    </location>
</feature>
<feature type="topological domain" description="Cytoplasmic" evidence="2">
    <location>
        <begin position="592"/>
        <end position="704"/>
    </location>
</feature>
<feature type="active site" description="4-aspartylphosphate intermediate" evidence="1">
    <location>
        <position position="81"/>
    </location>
</feature>
<feature type="binding site" evidence="1">
    <location>
        <position position="340"/>
    </location>
    <ligand>
        <name>Mg(2+)</name>
        <dbReference type="ChEBI" id="CHEBI:18420"/>
    </ligand>
</feature>
<feature type="binding site" evidence="1">
    <location>
        <position position="344"/>
    </location>
    <ligand>
        <name>Mg(2+)</name>
        <dbReference type="ChEBI" id="CHEBI:18420"/>
    </ligand>
</feature>
<feature type="non-terminal residue">
    <location>
        <position position="1"/>
    </location>
</feature>
<dbReference type="EC" id="7.1.2.1"/>
<dbReference type="SMR" id="P23980"/>
<dbReference type="STRING" id="4081.P23980"/>
<dbReference type="InParanoid" id="P23980"/>
<dbReference type="Proteomes" id="UP000004994">
    <property type="component" value="Unplaced"/>
</dbReference>
<dbReference type="ExpressionAtlas" id="P23980">
    <property type="expression patterns" value="baseline and differential"/>
</dbReference>
<dbReference type="GO" id="GO:0005886">
    <property type="term" value="C:plasma membrane"/>
    <property type="evidence" value="ECO:0007669"/>
    <property type="project" value="UniProtKB-SubCell"/>
</dbReference>
<dbReference type="GO" id="GO:0005524">
    <property type="term" value="F:ATP binding"/>
    <property type="evidence" value="ECO:0007669"/>
    <property type="project" value="UniProtKB-KW"/>
</dbReference>
<dbReference type="GO" id="GO:0016887">
    <property type="term" value="F:ATP hydrolysis activity"/>
    <property type="evidence" value="ECO:0007669"/>
    <property type="project" value="InterPro"/>
</dbReference>
<dbReference type="GO" id="GO:0046872">
    <property type="term" value="F:metal ion binding"/>
    <property type="evidence" value="ECO:0007669"/>
    <property type="project" value="UniProtKB-KW"/>
</dbReference>
<dbReference type="GO" id="GO:0008553">
    <property type="term" value="F:P-type proton-exporting transporter activity"/>
    <property type="evidence" value="ECO:0007669"/>
    <property type="project" value="UniProtKB-EC"/>
</dbReference>
<dbReference type="GO" id="GO:0120029">
    <property type="term" value="P:proton export across plasma membrane"/>
    <property type="evidence" value="ECO:0007669"/>
    <property type="project" value="InterPro"/>
</dbReference>
<dbReference type="FunFam" id="1.20.1110.10:FF:000045">
    <property type="entry name" value="ATPase 4 plasma membrane-type"/>
    <property type="match status" value="1"/>
</dbReference>
<dbReference type="FunFam" id="3.40.1110.10:FF:000004">
    <property type="entry name" value="Plasma membrane ATPase"/>
    <property type="match status" value="1"/>
</dbReference>
<dbReference type="FunFam" id="3.40.50.1000:FF:000211">
    <property type="entry name" value="Plasma membrane ATPase"/>
    <property type="match status" value="1"/>
</dbReference>
<dbReference type="Gene3D" id="6.10.140.890">
    <property type="match status" value="1"/>
</dbReference>
<dbReference type="Gene3D" id="3.40.1110.10">
    <property type="entry name" value="Calcium-transporting ATPase, cytoplasmic domain N"/>
    <property type="match status" value="1"/>
</dbReference>
<dbReference type="Gene3D" id="1.20.1110.10">
    <property type="entry name" value="Calcium-transporting ATPase, transmembrane domain"/>
    <property type="match status" value="1"/>
</dbReference>
<dbReference type="Gene3D" id="3.40.50.1000">
    <property type="entry name" value="HAD superfamily/HAD-like"/>
    <property type="match status" value="1"/>
</dbReference>
<dbReference type="InterPro" id="IPR023299">
    <property type="entry name" value="ATPase_P-typ_cyto_dom_N"/>
</dbReference>
<dbReference type="InterPro" id="IPR018303">
    <property type="entry name" value="ATPase_P-typ_P_site"/>
</dbReference>
<dbReference type="InterPro" id="IPR023298">
    <property type="entry name" value="ATPase_P-typ_TM_dom_sf"/>
</dbReference>
<dbReference type="InterPro" id="IPR036412">
    <property type="entry name" value="HAD-like_sf"/>
</dbReference>
<dbReference type="InterPro" id="IPR023214">
    <property type="entry name" value="HAD_sf"/>
</dbReference>
<dbReference type="InterPro" id="IPR006534">
    <property type="entry name" value="P-type_ATPase_IIIA"/>
</dbReference>
<dbReference type="InterPro" id="IPR001757">
    <property type="entry name" value="P_typ_ATPase"/>
</dbReference>
<dbReference type="InterPro" id="IPR044492">
    <property type="entry name" value="P_typ_ATPase_HD_dom"/>
</dbReference>
<dbReference type="NCBIfam" id="TIGR01647">
    <property type="entry name" value="ATPase-IIIA_H"/>
    <property type="match status" value="1"/>
</dbReference>
<dbReference type="NCBIfam" id="TIGR01494">
    <property type="entry name" value="ATPase_P-type"/>
    <property type="match status" value="1"/>
</dbReference>
<dbReference type="PANTHER" id="PTHR42861">
    <property type="entry name" value="CALCIUM-TRANSPORTING ATPASE"/>
    <property type="match status" value="1"/>
</dbReference>
<dbReference type="Pfam" id="PF00702">
    <property type="entry name" value="Hydrolase"/>
    <property type="match status" value="1"/>
</dbReference>
<dbReference type="PRINTS" id="PR00119">
    <property type="entry name" value="CATATPASE"/>
</dbReference>
<dbReference type="PRINTS" id="PR00120">
    <property type="entry name" value="HATPASE"/>
</dbReference>
<dbReference type="SFLD" id="SFLDS00003">
    <property type="entry name" value="Haloacid_Dehalogenase"/>
    <property type="match status" value="1"/>
</dbReference>
<dbReference type="SFLD" id="SFLDF00027">
    <property type="entry name" value="p-type_atpase"/>
    <property type="match status" value="1"/>
</dbReference>
<dbReference type="SUPFAM" id="SSF81665">
    <property type="entry name" value="Calcium ATPase, transmembrane domain M"/>
    <property type="match status" value="1"/>
</dbReference>
<dbReference type="SUPFAM" id="SSF56784">
    <property type="entry name" value="HAD-like"/>
    <property type="match status" value="1"/>
</dbReference>
<dbReference type="PROSITE" id="PS00154">
    <property type="entry name" value="ATPASE_E1_E2"/>
    <property type="match status" value="1"/>
</dbReference>
<protein>
    <recommendedName>
        <fullName>Plasma membrane ATPase 2</fullName>
        <ecNumber>7.1.2.1</ecNumber>
    </recommendedName>
    <alternativeName>
        <fullName>Proton pump 2</fullName>
    </alternativeName>
</protein>
<organism>
    <name type="scientific">Solanum lycopersicum</name>
    <name type="common">Tomato</name>
    <name type="synonym">Lycopersicon esculentum</name>
    <dbReference type="NCBI Taxonomy" id="4081"/>
    <lineage>
        <taxon>Eukaryota</taxon>
        <taxon>Viridiplantae</taxon>
        <taxon>Streptophyta</taxon>
        <taxon>Embryophyta</taxon>
        <taxon>Tracheophyta</taxon>
        <taxon>Spermatophyta</taxon>
        <taxon>Magnoliopsida</taxon>
        <taxon>eudicotyledons</taxon>
        <taxon>Gunneridae</taxon>
        <taxon>Pentapetalae</taxon>
        <taxon>asterids</taxon>
        <taxon>lamiids</taxon>
        <taxon>Solanales</taxon>
        <taxon>Solanaceae</taxon>
        <taxon>Solanoideae</taxon>
        <taxon>Solaneae</taxon>
        <taxon>Solanum</taxon>
        <taxon>Solanum subgen. Lycopersicon</taxon>
    </lineage>
</organism>
<reference key="1">
    <citation type="journal article" date="1990" name="Plant Physiol.">
        <title>Molecular cloning of tomato plasma membrane H+-ATPase.</title>
        <authorList>
            <person name="Ewing N.N."/>
            <person name="Wimmers L.E."/>
            <person name="Meyer D.J."/>
            <person name="Chetelat R.T."/>
            <person name="Bennett A.B."/>
        </authorList>
    </citation>
    <scope>NUCLEOTIDE SEQUENCE</scope>
    <source>
        <tissue>Root</tissue>
    </source>
</reference>
<sequence length="704" mass="78040">CSIAVGMIIEIIVMYPIQHRKYRPGIDNLLVLLIGGIPIAMPTVLSVTMAIGSHRLAQQGAITKRMTAIEEMAGMDVLCSDKTGTLTLNKLTVDKNLVEVFAKGVDADTVVLMAARASRTENQDAIDTAIVGMLADPKEARAGIREIHFLPFNPTDKRTALTYLDGEGKMHRVSKGAPEQILNLAHNKSDIERRVHTVIDKFAERGLRSLGVAYQEVPEGRKESSGGPWQFIGLLPLFDPPRHDSAETIRRALNLGVNVKMITGDQLAIGKETGRRLGMGTNMYPSSALLGQTKDESIASLPIDELIEKADGFAGVFPEHKYEIVKRLQARKHICGMTGDGVNDAPALKKADIGIAVDDATDAARSASDIVLTEPGLSVIISAVLTSRAIFQRMKNYTIYAVSITIRIVLGFMLLALIWKFDFPPFMVLIIAILNDGTIMTISKDRVKPSPLPDSWKLAEIFTTGVVLGGYLAMMTVIFFWAAYETQFFPRVFGVSTLQRTATDDFRKLASAIYLQVSTISQALIFVTRSRSWSFVERPGLLLVVALIVAQLVATLIAVYASWSFAAIEGIGWGWAGVIWLYNLVFYFPLDIIKFLIRYALSGRAWDLVLEQRIAFTRKKDFGKEQRELQWAHAQRTLHGLQVPDIKLFSEATNFNELNQLAEEAKRRAEIARQRELHTLKGHVESVVKLKGLDIETIQQSYTV</sequence>
<keyword id="KW-0067">ATP-binding</keyword>
<keyword id="KW-1003">Cell membrane</keyword>
<keyword id="KW-0375">Hydrogen ion transport</keyword>
<keyword id="KW-0406">Ion transport</keyword>
<keyword id="KW-0460">Magnesium</keyword>
<keyword id="KW-0472">Membrane</keyword>
<keyword id="KW-0479">Metal-binding</keyword>
<keyword id="KW-0547">Nucleotide-binding</keyword>
<keyword id="KW-0597">Phosphoprotein</keyword>
<keyword id="KW-1185">Reference proteome</keyword>
<keyword id="KW-1278">Translocase</keyword>
<keyword id="KW-0812">Transmembrane</keyword>
<keyword id="KW-1133">Transmembrane helix</keyword>
<keyword id="KW-0813">Transport</keyword>
<proteinExistence type="inferred from homology"/>
<comment type="function">
    <text>The plasma membrane ATPase of plants and fungi is a hydrogen ion pump. The proton gradient it generates drives the active transport of nutrients by H(+)-symport. The resulting external acidification and/or internal alkinization may mediate growth responses.</text>
</comment>
<comment type="catalytic activity">
    <reaction>
        <text>ATP + H2O + H(+)(in) = ADP + phosphate + 2 H(+)(out)</text>
        <dbReference type="Rhea" id="RHEA:20852"/>
        <dbReference type="ChEBI" id="CHEBI:15377"/>
        <dbReference type="ChEBI" id="CHEBI:15378"/>
        <dbReference type="ChEBI" id="CHEBI:30616"/>
        <dbReference type="ChEBI" id="CHEBI:43474"/>
        <dbReference type="ChEBI" id="CHEBI:456216"/>
        <dbReference type="EC" id="7.1.2.1"/>
    </reaction>
</comment>
<comment type="subunit">
    <text>Possibly exists as a homodimer or a homotrimer.</text>
</comment>
<comment type="subcellular location">
    <subcellularLocation>
        <location>Cell membrane</location>
        <topology>Multi-pass membrane protein</topology>
    </subcellularLocation>
</comment>
<comment type="miscellaneous">
    <text>As many as 6 to 8 closely related genes may encode other isoforms of plasma membrane ATPase in tomato, like the LHA1 gene product which is 96% identical to the LHA2 gene product.</text>
</comment>
<comment type="similarity">
    <text evidence="3">Belongs to the cation transport ATPase (P-type) (TC 3.A.3) family. Type IIIA subfamily.</text>
</comment>
<accession>P23980</accession>
<gene>
    <name type="primary">LHA2</name>
</gene>
<name>PMA2_SOLLC</name>